<comment type="function">
    <text evidence="1">Catalyzes the conversion of glucosamine-6-phosphate to glucosamine-1-phosphate.</text>
</comment>
<comment type="catalytic activity">
    <reaction evidence="1">
        <text>alpha-D-glucosamine 1-phosphate = D-glucosamine 6-phosphate</text>
        <dbReference type="Rhea" id="RHEA:23424"/>
        <dbReference type="ChEBI" id="CHEBI:58516"/>
        <dbReference type="ChEBI" id="CHEBI:58725"/>
        <dbReference type="EC" id="5.4.2.10"/>
    </reaction>
</comment>
<comment type="cofactor">
    <cofactor evidence="1">
        <name>Mg(2+)</name>
        <dbReference type="ChEBI" id="CHEBI:18420"/>
    </cofactor>
    <text evidence="1">Binds 1 Mg(2+) ion per subunit.</text>
</comment>
<comment type="PTM">
    <text evidence="1">Activated by phosphorylation.</text>
</comment>
<comment type="similarity">
    <text evidence="1">Belongs to the phosphohexose mutase family.</text>
</comment>
<organism>
    <name type="scientific">Pseudomonas aeruginosa (strain UCBPP-PA14)</name>
    <dbReference type="NCBI Taxonomy" id="208963"/>
    <lineage>
        <taxon>Bacteria</taxon>
        <taxon>Pseudomonadati</taxon>
        <taxon>Pseudomonadota</taxon>
        <taxon>Gammaproteobacteria</taxon>
        <taxon>Pseudomonadales</taxon>
        <taxon>Pseudomonadaceae</taxon>
        <taxon>Pseudomonas</taxon>
    </lineage>
</organism>
<keyword id="KW-0413">Isomerase</keyword>
<keyword id="KW-0460">Magnesium</keyword>
<keyword id="KW-0479">Metal-binding</keyword>
<keyword id="KW-0597">Phosphoprotein</keyword>
<sequence>MSRKYFGTDGIRGRVGEFPITPDFVLKLGWAVGMAFRRQGNCRVLIGKDTRSSGYMFESAFEAGLSASGADTLLLGPMPTPGIAYLTRTFHAEAGVVISASHNPHDDNGIKFFSGQGTKLPDDVELMIEELLDAPMTVVESARLGKVSRINDAAGRYIEFCKSSVPTSTDFNGLKVVLDCANGATYKIAPSVFRELGAEVTVLAASPNGLNINDKCGSTHLDGLQAAVVEHHADLGIAFDGDGDRVMMVDHTGAVVDGDELLFLIARDLQESGRLQGGVVGTLMSNLGLELALQELHIPFVRAKVGDRYVMAELLARNWMLGGENSGHIVCCQNTTTGDAIIAALQVLMALKHRGQTLAEARQGIRKCPQVLINVRFKGENDPLEHPSVKEASVRVTEQMGGRGRVLLRKSGTEPLVRVMVEGDEEASVRAHAEQLAKIVSEVCA</sequence>
<reference key="1">
    <citation type="journal article" date="2006" name="Genome Biol.">
        <title>Genomic analysis reveals that Pseudomonas aeruginosa virulence is combinatorial.</title>
        <authorList>
            <person name="Lee D.G."/>
            <person name="Urbach J.M."/>
            <person name="Wu G."/>
            <person name="Liberati N.T."/>
            <person name="Feinbaum R.L."/>
            <person name="Miyata S."/>
            <person name="Diggins L.T."/>
            <person name="He J."/>
            <person name="Saucier M."/>
            <person name="Deziel E."/>
            <person name="Friedman L."/>
            <person name="Li L."/>
            <person name="Grills G."/>
            <person name="Montgomery K."/>
            <person name="Kucherlapati R."/>
            <person name="Rahme L.G."/>
            <person name="Ausubel F.M."/>
        </authorList>
    </citation>
    <scope>NUCLEOTIDE SEQUENCE [LARGE SCALE GENOMIC DNA]</scope>
    <source>
        <strain>UCBPP-PA14</strain>
    </source>
</reference>
<accession>Q02FS3</accession>
<protein>
    <recommendedName>
        <fullName evidence="1">Phosphoglucosamine mutase</fullName>
        <ecNumber evidence="1">5.4.2.10</ecNumber>
    </recommendedName>
</protein>
<name>GLMM_PSEAB</name>
<feature type="chain" id="PRO_0000301358" description="Phosphoglucosamine mutase">
    <location>
        <begin position="1"/>
        <end position="445"/>
    </location>
</feature>
<feature type="active site" description="Phosphoserine intermediate" evidence="1">
    <location>
        <position position="101"/>
    </location>
</feature>
<feature type="binding site" description="via phosphate group" evidence="1">
    <location>
        <position position="101"/>
    </location>
    <ligand>
        <name>Mg(2+)</name>
        <dbReference type="ChEBI" id="CHEBI:18420"/>
    </ligand>
</feature>
<feature type="binding site" evidence="1">
    <location>
        <position position="240"/>
    </location>
    <ligand>
        <name>Mg(2+)</name>
        <dbReference type="ChEBI" id="CHEBI:18420"/>
    </ligand>
</feature>
<feature type="binding site" evidence="1">
    <location>
        <position position="242"/>
    </location>
    <ligand>
        <name>Mg(2+)</name>
        <dbReference type="ChEBI" id="CHEBI:18420"/>
    </ligand>
</feature>
<feature type="binding site" evidence="1">
    <location>
        <position position="244"/>
    </location>
    <ligand>
        <name>Mg(2+)</name>
        <dbReference type="ChEBI" id="CHEBI:18420"/>
    </ligand>
</feature>
<feature type="modified residue" description="Phosphoserine" evidence="1">
    <location>
        <position position="101"/>
    </location>
</feature>
<gene>
    <name evidence="1" type="primary">glmM</name>
    <name type="ordered locus">PA14_62840</name>
</gene>
<dbReference type="EC" id="5.4.2.10" evidence="1"/>
<dbReference type="EMBL" id="CP000438">
    <property type="protein sequence ID" value="ABJ14132.1"/>
    <property type="molecule type" value="Genomic_DNA"/>
</dbReference>
<dbReference type="RefSeq" id="WP_003095196.1">
    <property type="nucleotide sequence ID" value="NZ_CP034244.1"/>
</dbReference>
<dbReference type="SMR" id="Q02FS3"/>
<dbReference type="KEGG" id="pau:PA14_62840"/>
<dbReference type="PseudoCAP" id="PA14_62840"/>
<dbReference type="HOGENOM" id="CLU_016950_7_0_6"/>
<dbReference type="BioCyc" id="PAER208963:G1G74-5314-MONOMER"/>
<dbReference type="Proteomes" id="UP000000653">
    <property type="component" value="Chromosome"/>
</dbReference>
<dbReference type="GO" id="GO:0005829">
    <property type="term" value="C:cytosol"/>
    <property type="evidence" value="ECO:0007669"/>
    <property type="project" value="TreeGrafter"/>
</dbReference>
<dbReference type="GO" id="GO:0000287">
    <property type="term" value="F:magnesium ion binding"/>
    <property type="evidence" value="ECO:0007669"/>
    <property type="project" value="UniProtKB-UniRule"/>
</dbReference>
<dbReference type="GO" id="GO:0008966">
    <property type="term" value="F:phosphoglucosamine mutase activity"/>
    <property type="evidence" value="ECO:0007669"/>
    <property type="project" value="UniProtKB-UniRule"/>
</dbReference>
<dbReference type="GO" id="GO:0004615">
    <property type="term" value="F:phosphomannomutase activity"/>
    <property type="evidence" value="ECO:0007669"/>
    <property type="project" value="TreeGrafter"/>
</dbReference>
<dbReference type="GO" id="GO:0005975">
    <property type="term" value="P:carbohydrate metabolic process"/>
    <property type="evidence" value="ECO:0007669"/>
    <property type="project" value="InterPro"/>
</dbReference>
<dbReference type="GO" id="GO:0009252">
    <property type="term" value="P:peptidoglycan biosynthetic process"/>
    <property type="evidence" value="ECO:0007669"/>
    <property type="project" value="TreeGrafter"/>
</dbReference>
<dbReference type="GO" id="GO:0006048">
    <property type="term" value="P:UDP-N-acetylglucosamine biosynthetic process"/>
    <property type="evidence" value="ECO:0007669"/>
    <property type="project" value="TreeGrafter"/>
</dbReference>
<dbReference type="CDD" id="cd05802">
    <property type="entry name" value="GlmM"/>
    <property type="match status" value="1"/>
</dbReference>
<dbReference type="FunFam" id="3.30.310.50:FF:000001">
    <property type="entry name" value="Phosphoglucosamine mutase"/>
    <property type="match status" value="1"/>
</dbReference>
<dbReference type="FunFam" id="3.40.120.10:FF:000001">
    <property type="entry name" value="Phosphoglucosamine mutase"/>
    <property type="match status" value="1"/>
</dbReference>
<dbReference type="FunFam" id="3.40.120.10:FF:000003">
    <property type="entry name" value="Phosphoglucosamine mutase"/>
    <property type="match status" value="1"/>
</dbReference>
<dbReference type="Gene3D" id="3.40.120.10">
    <property type="entry name" value="Alpha-D-Glucose-1,6-Bisphosphate, subunit A, domain 3"/>
    <property type="match status" value="3"/>
</dbReference>
<dbReference type="Gene3D" id="3.30.310.50">
    <property type="entry name" value="Alpha-D-phosphohexomutase, C-terminal domain"/>
    <property type="match status" value="1"/>
</dbReference>
<dbReference type="HAMAP" id="MF_01554_B">
    <property type="entry name" value="GlmM_B"/>
    <property type="match status" value="1"/>
</dbReference>
<dbReference type="InterPro" id="IPR005844">
    <property type="entry name" value="A-D-PHexomutase_a/b/a-I"/>
</dbReference>
<dbReference type="InterPro" id="IPR016055">
    <property type="entry name" value="A-D-PHexomutase_a/b/a-I/II/III"/>
</dbReference>
<dbReference type="InterPro" id="IPR005845">
    <property type="entry name" value="A-D-PHexomutase_a/b/a-II"/>
</dbReference>
<dbReference type="InterPro" id="IPR005846">
    <property type="entry name" value="A-D-PHexomutase_a/b/a-III"/>
</dbReference>
<dbReference type="InterPro" id="IPR005843">
    <property type="entry name" value="A-D-PHexomutase_C"/>
</dbReference>
<dbReference type="InterPro" id="IPR036900">
    <property type="entry name" value="A-D-PHexomutase_C_sf"/>
</dbReference>
<dbReference type="InterPro" id="IPR016066">
    <property type="entry name" value="A-D-PHexomutase_CS"/>
</dbReference>
<dbReference type="InterPro" id="IPR005841">
    <property type="entry name" value="Alpha-D-phosphohexomutase_SF"/>
</dbReference>
<dbReference type="InterPro" id="IPR006352">
    <property type="entry name" value="GlmM_bact"/>
</dbReference>
<dbReference type="InterPro" id="IPR050060">
    <property type="entry name" value="Phosphoglucosamine_mutase"/>
</dbReference>
<dbReference type="NCBIfam" id="TIGR01455">
    <property type="entry name" value="glmM"/>
    <property type="match status" value="1"/>
</dbReference>
<dbReference type="NCBIfam" id="NF008139">
    <property type="entry name" value="PRK10887.1"/>
    <property type="match status" value="1"/>
</dbReference>
<dbReference type="PANTHER" id="PTHR42946:SF1">
    <property type="entry name" value="PHOSPHOGLUCOMUTASE (ALPHA-D-GLUCOSE-1,6-BISPHOSPHATE-DEPENDENT)"/>
    <property type="match status" value="1"/>
</dbReference>
<dbReference type="PANTHER" id="PTHR42946">
    <property type="entry name" value="PHOSPHOHEXOSE MUTASE"/>
    <property type="match status" value="1"/>
</dbReference>
<dbReference type="Pfam" id="PF02878">
    <property type="entry name" value="PGM_PMM_I"/>
    <property type="match status" value="1"/>
</dbReference>
<dbReference type="Pfam" id="PF02879">
    <property type="entry name" value="PGM_PMM_II"/>
    <property type="match status" value="1"/>
</dbReference>
<dbReference type="Pfam" id="PF02880">
    <property type="entry name" value="PGM_PMM_III"/>
    <property type="match status" value="1"/>
</dbReference>
<dbReference type="Pfam" id="PF00408">
    <property type="entry name" value="PGM_PMM_IV"/>
    <property type="match status" value="1"/>
</dbReference>
<dbReference type="PRINTS" id="PR00509">
    <property type="entry name" value="PGMPMM"/>
</dbReference>
<dbReference type="SUPFAM" id="SSF55957">
    <property type="entry name" value="Phosphoglucomutase, C-terminal domain"/>
    <property type="match status" value="1"/>
</dbReference>
<dbReference type="SUPFAM" id="SSF53738">
    <property type="entry name" value="Phosphoglucomutase, first 3 domains"/>
    <property type="match status" value="3"/>
</dbReference>
<dbReference type="PROSITE" id="PS00710">
    <property type="entry name" value="PGM_PMM"/>
    <property type="match status" value="1"/>
</dbReference>
<evidence type="ECO:0000255" key="1">
    <source>
        <dbReference type="HAMAP-Rule" id="MF_01554"/>
    </source>
</evidence>
<proteinExistence type="inferred from homology"/>